<proteinExistence type="evidence at transcript level"/>
<dbReference type="EMBL" id="AY665293">
    <property type="protein sequence ID" value="AAV74331.1"/>
    <property type="molecule type" value="mRNA"/>
</dbReference>
<dbReference type="RefSeq" id="NP_001306520.1">
    <property type="nucleotide sequence ID" value="NM_001319591.1"/>
</dbReference>
<dbReference type="RefSeq" id="XP_005584981.2">
    <property type="nucleotide sequence ID" value="XM_005584924.2"/>
</dbReference>
<dbReference type="RefSeq" id="XP_005584982.2">
    <property type="nucleotide sequence ID" value="XM_005584925.2"/>
</dbReference>
<dbReference type="RefSeq" id="XP_005584983.2">
    <property type="nucleotide sequence ID" value="XM_005584926.2"/>
</dbReference>
<dbReference type="RefSeq" id="XP_015294319.1">
    <property type="nucleotide sequence ID" value="XM_015438833.1"/>
</dbReference>
<dbReference type="RefSeq" id="XP_015294320.1">
    <property type="nucleotide sequence ID" value="XM_015438834.1"/>
</dbReference>
<dbReference type="RefSeq" id="XP_045232649.1">
    <property type="nucleotide sequence ID" value="XM_045376714.2"/>
</dbReference>
<dbReference type="RefSeq" id="XP_045232650.1">
    <property type="nucleotide sequence ID" value="XM_045376715.2"/>
</dbReference>
<dbReference type="RefSeq" id="XP_045232651.1">
    <property type="nucleotide sequence ID" value="XM_045376716.2"/>
</dbReference>
<dbReference type="RefSeq" id="XP_045232652.1">
    <property type="nucleotide sequence ID" value="XM_045376717.2"/>
</dbReference>
<dbReference type="SMR" id="Q5IS35"/>
<dbReference type="STRING" id="9541.ENSMFAP00000014469"/>
<dbReference type="GeneID" id="102117428"/>
<dbReference type="eggNOG" id="KOG0752">
    <property type="taxonomic scope" value="Eukaryota"/>
</dbReference>
<dbReference type="Proteomes" id="UP000233100">
    <property type="component" value="Unplaced"/>
</dbReference>
<dbReference type="GO" id="GO:0031966">
    <property type="term" value="C:mitochondrial membrane"/>
    <property type="evidence" value="ECO:0007669"/>
    <property type="project" value="UniProtKB-SubCell"/>
</dbReference>
<dbReference type="GO" id="GO:0005739">
    <property type="term" value="C:mitochondrion"/>
    <property type="evidence" value="ECO:0000250"/>
    <property type="project" value="UniProtKB"/>
</dbReference>
<dbReference type="GO" id="GO:0015297">
    <property type="term" value="F:antiporter activity"/>
    <property type="evidence" value="ECO:0007669"/>
    <property type="project" value="UniProtKB-KW"/>
</dbReference>
<dbReference type="GO" id="GO:0090422">
    <property type="term" value="F:thiamine pyrophosphate transmembrane transporter activity"/>
    <property type="evidence" value="ECO:0000250"/>
    <property type="project" value="UniProtKB"/>
</dbReference>
<dbReference type="GO" id="GO:0030974">
    <property type="term" value="P:thiamine pyrophosphate transmembrane transport"/>
    <property type="evidence" value="ECO:0000250"/>
    <property type="project" value="UniProtKB"/>
</dbReference>
<dbReference type="FunFam" id="1.50.40.10:FF:000011">
    <property type="entry name" value="Mitochondrial thiamine pyrophosphate carrier 1"/>
    <property type="match status" value="1"/>
</dbReference>
<dbReference type="Gene3D" id="1.50.40.10">
    <property type="entry name" value="Mitochondrial carrier domain"/>
    <property type="match status" value="1"/>
</dbReference>
<dbReference type="InterPro" id="IPR002067">
    <property type="entry name" value="Mit_carrier"/>
</dbReference>
<dbReference type="InterPro" id="IPR018108">
    <property type="entry name" value="Mitochondrial_sb/sol_carrier"/>
</dbReference>
<dbReference type="InterPro" id="IPR023395">
    <property type="entry name" value="Mt_carrier_dom_sf"/>
</dbReference>
<dbReference type="PANTHER" id="PTHR24089">
    <property type="entry name" value="SOLUTE CARRIER FAMILY 25"/>
    <property type="match status" value="1"/>
</dbReference>
<dbReference type="Pfam" id="PF00153">
    <property type="entry name" value="Mito_carr"/>
    <property type="match status" value="3"/>
</dbReference>
<dbReference type="PRINTS" id="PR00926">
    <property type="entry name" value="MITOCARRIER"/>
</dbReference>
<dbReference type="SUPFAM" id="SSF103506">
    <property type="entry name" value="Mitochondrial carrier"/>
    <property type="match status" value="1"/>
</dbReference>
<dbReference type="PROSITE" id="PS50920">
    <property type="entry name" value="SOLCAR"/>
    <property type="match status" value="3"/>
</dbReference>
<evidence type="ECO:0000250" key="1"/>
<evidence type="ECO:0000250" key="2">
    <source>
        <dbReference type="UniProtKB" id="Q9HC21"/>
    </source>
</evidence>
<evidence type="ECO:0000255" key="3"/>
<evidence type="ECO:0000255" key="4">
    <source>
        <dbReference type="PROSITE-ProRule" id="PRU00282"/>
    </source>
</evidence>
<evidence type="ECO:0000305" key="5"/>
<comment type="function">
    <text evidence="2">Mitochondrial transporter mediating uptake of thiamine diphosphate into mitochondria. It is not clear if the antiporter activity is affected by the membrane potential or by the proton electrochemical gradient.</text>
</comment>
<comment type="catalytic activity">
    <reaction evidence="2">
        <text>thiamine phosphate(out) + thiamine diphosphate(in) = thiamine phosphate(in) + thiamine diphosphate(out)</text>
        <dbReference type="Rhea" id="RHEA:73383"/>
        <dbReference type="ChEBI" id="CHEBI:37575"/>
        <dbReference type="ChEBI" id="CHEBI:58937"/>
    </reaction>
</comment>
<comment type="subcellular location">
    <subcellularLocation>
        <location evidence="2">Mitochondrion membrane</location>
        <topology evidence="3">Multi-pass membrane protein</topology>
    </subcellularLocation>
</comment>
<comment type="similarity">
    <text evidence="5">Belongs to the mitochondrial carrier (TC 2.A.29) family.</text>
</comment>
<comment type="caution">
    <text evidence="2">Previously identified as the mitochondrial deoxyribonucleotide carrier. However other experiments later demonstrated that SLC25A19 is a thiamine diphosphate transporter and not a mitochondrial deoxyribonucleotide carrier.</text>
</comment>
<organism>
    <name type="scientific">Macaca fascicularis</name>
    <name type="common">Crab-eating macaque</name>
    <name type="synonym">Cynomolgus monkey</name>
    <dbReference type="NCBI Taxonomy" id="9541"/>
    <lineage>
        <taxon>Eukaryota</taxon>
        <taxon>Metazoa</taxon>
        <taxon>Chordata</taxon>
        <taxon>Craniata</taxon>
        <taxon>Vertebrata</taxon>
        <taxon>Euteleostomi</taxon>
        <taxon>Mammalia</taxon>
        <taxon>Eutheria</taxon>
        <taxon>Euarchontoglires</taxon>
        <taxon>Primates</taxon>
        <taxon>Haplorrhini</taxon>
        <taxon>Catarrhini</taxon>
        <taxon>Cercopithecidae</taxon>
        <taxon>Cercopithecinae</taxon>
        <taxon>Macaca</taxon>
    </lineage>
</organism>
<protein>
    <recommendedName>
        <fullName>Mitochondrial thiamine pyrophosphate carrier</fullName>
    </recommendedName>
    <alternativeName>
        <fullName>Solute carrier family 25 member 19</fullName>
    </alternativeName>
</protein>
<keyword id="KW-0050">Antiport</keyword>
<keyword id="KW-0472">Membrane</keyword>
<keyword id="KW-0496">Mitochondrion</keyword>
<keyword id="KW-0597">Phosphoprotein</keyword>
<keyword id="KW-1185">Reference proteome</keyword>
<keyword id="KW-0677">Repeat</keyword>
<keyword id="KW-0812">Transmembrane</keyword>
<keyword id="KW-1133">Transmembrane helix</keyword>
<keyword id="KW-0813">Transport</keyword>
<name>TPC_MACFA</name>
<sequence length="320" mass="35724">MVGYDPKPDGRNNTKLQVAVAGSVSGLVTRALISPFDVIKIRFQLQHERLSRRDPNAKYHGIFQASRQILQEEGLTAFWKGHIPAQILSIGYGAVQFLSFEMLTELVHRGSVYDAREFSVHFVCGGLAACTATLTVHPVDVLRTRFAAQGEPKVYNTLRHAVGTMYRSEGPQVFYKGLAPTLIAIFPYAGLQFSCYSSLKHLYKWAMPAEGKKNENLQNLLCGSGAGVISKTLTYPLDLFKKRLQVGGFEHARAAFGQVRRYKGLMDCAKQVLQKEGALGFFKGLSPSLLKAALSTGFMFFWYEFFCNVFHCMNRTASQR</sequence>
<reference key="1">
    <citation type="journal article" date="2004" name="Cell">
        <title>Accelerated evolution of nervous system genes in the origin of Homo sapiens.</title>
        <authorList>
            <person name="Dorus S."/>
            <person name="Vallender E.J."/>
            <person name="Evans P.D."/>
            <person name="Anderson J.R."/>
            <person name="Gilbert S.L."/>
            <person name="Mahowald M."/>
            <person name="Wyckoff G.J."/>
            <person name="Malcom C.M."/>
            <person name="Lahn B.T."/>
        </authorList>
    </citation>
    <scope>NUCLEOTIDE SEQUENCE [MRNA]</scope>
</reference>
<accession>Q5IS35</accession>
<feature type="chain" id="PRO_0000090612" description="Mitochondrial thiamine pyrophosphate carrier">
    <location>
        <begin position="1"/>
        <end position="320"/>
    </location>
</feature>
<feature type="transmembrane region" description="Helical; Name=1" evidence="3">
    <location>
        <begin position="19"/>
        <end position="39"/>
    </location>
</feature>
<feature type="transmembrane region" description="Helical; Name=2" evidence="3">
    <location>
        <begin position="87"/>
        <end position="107"/>
    </location>
</feature>
<feature type="transmembrane region" description="Helical; Name=3" evidence="3">
    <location>
        <begin position="122"/>
        <end position="142"/>
    </location>
</feature>
<feature type="transmembrane region" description="Helical; Name=4" evidence="3">
    <location>
        <begin position="173"/>
        <end position="193"/>
    </location>
</feature>
<feature type="transmembrane region" description="Helical; Name=5" evidence="3">
    <location>
        <begin position="220"/>
        <end position="240"/>
    </location>
</feature>
<feature type="transmembrane region" description="Helical; Name=6" evidence="3">
    <location>
        <begin position="293"/>
        <end position="313"/>
    </location>
</feature>
<feature type="repeat" description="Solcar 1" evidence="4">
    <location>
        <begin position="13"/>
        <end position="106"/>
    </location>
</feature>
<feature type="repeat" description="Solcar 2" evidence="4">
    <location>
        <begin position="116"/>
        <end position="202"/>
    </location>
</feature>
<feature type="repeat" description="Solcar 3" evidence="4">
    <location>
        <begin position="214"/>
        <end position="309"/>
    </location>
</feature>
<feature type="short sequence motif" description="Substrate recognition" evidence="1">
    <location>
        <begin position="241"/>
        <end position="246"/>
    </location>
</feature>
<feature type="modified residue" description="Phosphoserine" evidence="2">
    <location>
        <position position="51"/>
    </location>
</feature>
<gene>
    <name type="primary">SLC25A19</name>
</gene>